<feature type="chain" id="PRO_0000067128" description="Putative ankyrin repeat protein FPV242">
    <location>
        <begin position="1"/>
        <end position="358"/>
    </location>
</feature>
<feature type="repeat" description="ANK 1">
    <location>
        <begin position="6"/>
        <end position="35"/>
    </location>
</feature>
<feature type="repeat" description="ANK 2">
    <location>
        <begin position="40"/>
        <end position="69"/>
    </location>
</feature>
<feature type="repeat" description="ANK 3">
    <location>
        <begin position="91"/>
        <end position="118"/>
    </location>
</feature>
<feature type="repeat" description="ANK 4">
    <location>
        <begin position="119"/>
        <end position="147"/>
    </location>
</feature>
<feature type="repeat" description="ANK 5">
    <location>
        <begin position="149"/>
        <end position="177"/>
    </location>
</feature>
<feature type="repeat" description="ANK 6">
    <location>
        <begin position="180"/>
        <end position="209"/>
    </location>
</feature>
<feature type="repeat" description="ANK 7">
    <location>
        <begin position="214"/>
        <end position="243"/>
    </location>
</feature>
<feature type="repeat" description="ANK 8">
    <location>
        <begin position="248"/>
        <end position="277"/>
    </location>
</feature>
<feature type="repeat" description="ANK 9">
    <location>
        <begin position="280"/>
        <end position="312"/>
    </location>
</feature>
<feature type="repeat" description="ANK 10">
    <location>
        <begin position="316"/>
        <end position="345"/>
    </location>
</feature>
<organism>
    <name type="scientific">Fowlpox virus (strain NVSL)</name>
    <name type="common">FPV</name>
    <dbReference type="NCBI Taxonomy" id="928301"/>
    <lineage>
        <taxon>Viruses</taxon>
        <taxon>Varidnaviria</taxon>
        <taxon>Bamfordvirae</taxon>
        <taxon>Nucleocytoviricota</taxon>
        <taxon>Pokkesviricetes</taxon>
        <taxon>Chitovirales</taxon>
        <taxon>Poxviridae</taxon>
        <taxon>Chordopoxvirinae</taxon>
        <taxon>Avipoxvirus</taxon>
        <taxon>Fowlpox virus</taxon>
    </lineage>
</organism>
<proteinExistence type="predicted"/>
<keyword id="KW-0040">ANK repeat</keyword>
<keyword id="KW-1185">Reference proteome</keyword>
<keyword id="KW-0677">Repeat</keyword>
<name>V242_FOWPN</name>
<accession>Q9J4Z8</accession>
<dbReference type="EMBL" id="AF198100">
    <property type="protein sequence ID" value="AAF44586.1"/>
    <property type="molecule type" value="Genomic_DNA"/>
</dbReference>
<dbReference type="RefSeq" id="NP_039205.1">
    <property type="nucleotide sequence ID" value="NC_002188.1"/>
</dbReference>
<dbReference type="SMR" id="Q9J4Z8"/>
<dbReference type="GeneID" id="1486814"/>
<dbReference type="KEGG" id="vg:1486814"/>
<dbReference type="Proteomes" id="UP000008597">
    <property type="component" value="Segment"/>
</dbReference>
<dbReference type="Gene3D" id="1.25.40.20">
    <property type="entry name" value="Ankyrin repeat-containing domain"/>
    <property type="match status" value="2"/>
</dbReference>
<dbReference type="InterPro" id="IPR002110">
    <property type="entry name" value="Ankyrin_rpt"/>
</dbReference>
<dbReference type="InterPro" id="IPR036770">
    <property type="entry name" value="Ankyrin_rpt-contain_sf"/>
</dbReference>
<dbReference type="PANTHER" id="PTHR24126:SF14">
    <property type="entry name" value="ANK_REP_REGION DOMAIN-CONTAINING PROTEIN"/>
    <property type="match status" value="1"/>
</dbReference>
<dbReference type="PANTHER" id="PTHR24126">
    <property type="entry name" value="ANKYRIN REPEAT, PH AND SEC7 DOMAIN CONTAINING PROTEIN SECG-RELATED"/>
    <property type="match status" value="1"/>
</dbReference>
<dbReference type="Pfam" id="PF12796">
    <property type="entry name" value="Ank_2"/>
    <property type="match status" value="2"/>
</dbReference>
<dbReference type="Pfam" id="PF13637">
    <property type="entry name" value="Ank_4"/>
    <property type="match status" value="1"/>
</dbReference>
<dbReference type="SMART" id="SM00248">
    <property type="entry name" value="ANK"/>
    <property type="match status" value="7"/>
</dbReference>
<dbReference type="SUPFAM" id="SSF48403">
    <property type="entry name" value="Ankyrin repeat"/>
    <property type="match status" value="1"/>
</dbReference>
<dbReference type="PROSITE" id="PS50297">
    <property type="entry name" value="ANK_REP_REGION"/>
    <property type="match status" value="2"/>
</dbReference>
<dbReference type="PROSITE" id="PS50088">
    <property type="entry name" value="ANK_REPEAT"/>
    <property type="match status" value="3"/>
</dbReference>
<reference key="1">
    <citation type="journal article" date="2000" name="J. Virol.">
        <title>The genome of fowlpox virus.</title>
        <authorList>
            <person name="Afonso C.L."/>
            <person name="Tulman E.R."/>
            <person name="Lu Z."/>
            <person name="Zsak L."/>
            <person name="Kutish G.F."/>
            <person name="Rock D.L."/>
        </authorList>
    </citation>
    <scope>NUCLEOTIDE SEQUENCE [LARGE SCALE GENOMIC DNA]</scope>
</reference>
<organismHost>
    <name type="scientific">Vertebrata</name>
    <dbReference type="NCBI Taxonomy" id="7742"/>
</organismHost>
<protein>
    <recommendedName>
        <fullName>Putative ankyrin repeat protein FPV242</fullName>
    </recommendedName>
</protein>
<sequence>MISFNNNYRKLRKAIINEDIEEIKYIIEKDPNMIVKVDNNNHTLLHIAIMYRKVNAVKVLLDKGDNLVYVINSFPILPPLYCAIIGFCKLTRRNKISNALEKINNHKKIIEALVDKGVELTGLEIALSCKNIWLIKFLIEKGISVEYTGFFPVGVNYNTIDIDICKVLLENKIDINKPVCGETLVRYAIRSSDLNLLKYLISKGADIEKRNKYEQDPNIIEAVEKGNLGIVEYLIDNGISIDTVSIYNHKPAIYYAILAGHYNMVDLLLRRGANPFITCEGNTSLISVATQAKRNRLKLINLLLKYGVRLPGDHDYYIQPILLDYSYETYNIIHILLEHGLRITSNTTLVSTFLIIRV</sequence>
<gene>
    <name type="ordered locus">FPV242</name>
</gene>